<keyword id="KW-0002">3D-structure</keyword>
<keyword id="KW-0963">Cytoplasm</keyword>
<keyword id="KW-0238">DNA-binding</keyword>
<keyword id="KW-0240">DNA-directed RNA polymerase</keyword>
<keyword id="KW-0548">Nucleotidyltransferase</keyword>
<keyword id="KW-1185">Reference proteome</keyword>
<keyword id="KW-0804">Transcription</keyword>
<keyword id="KW-0808">Transferase</keyword>
<sequence>MIDEKDKPYLEEKVKQASNILPQKIVDDLKNLILNKEIIVTRDEIDKIFDLAIKEYSEGLIAPGEAIGIVAAQSVGEPGTQMTLRTFHFAGIRELNVTLGLPRLIEIVDAKKVPSTPMMTIYLTDEYKRDRDKALEVARKLEYTKIENVVSSTSIDIASMSIILQLDNEMLKDKGVTVDDVKKAIGRLKLGDFMIEESEDSTLNINFANIDSIAALFKLRDKILNTKIKGIKGIKRAIVQKKGDEYIILTDGSNLSGVLSVKGVDVAKVETNNIREIEEVFGIEAAREIIIREISKVLAEQGLDVDIRHILLIADVMTRTGIVRQIGRHGVTGEKNSVLARAAFEVTVKHLLDAAARGDVEEFKGVVENIIIGHPIKLGTGMVELTMRPILR</sequence>
<proteinExistence type="evidence at protein level"/>
<comment type="function">
    <text evidence="1 2">DNA-dependent RNA polymerase (RNAP) catalyzes the transcription of DNA into RNA using the four ribonucleoside triphosphates as substrates. Forms part of the jaw domain.</text>
</comment>
<comment type="catalytic activity">
    <reaction evidence="1">
        <text>RNA(n) + a ribonucleoside 5'-triphosphate = RNA(n+1) + diphosphate</text>
        <dbReference type="Rhea" id="RHEA:21248"/>
        <dbReference type="Rhea" id="RHEA-COMP:14527"/>
        <dbReference type="Rhea" id="RHEA-COMP:17342"/>
        <dbReference type="ChEBI" id="CHEBI:33019"/>
        <dbReference type="ChEBI" id="CHEBI:61557"/>
        <dbReference type="ChEBI" id="CHEBI:140395"/>
        <dbReference type="EC" id="2.7.7.6"/>
    </reaction>
</comment>
<comment type="subunit">
    <text evidence="2">Part of the 13-subunit RNA polymerase complex.</text>
</comment>
<comment type="subcellular location">
    <subcellularLocation>
        <location evidence="1">Cytoplasm</location>
    </subcellularLocation>
</comment>
<comment type="similarity">
    <text evidence="1">Belongs to the RNA polymerase beta' chain family.</text>
</comment>
<comment type="sequence caution" evidence="3">
    <conflict type="erroneous initiation">
        <sequence resource="EMBL-CDS" id="AAK40565"/>
    </conflict>
    <text>Extended N-terminus.</text>
</comment>
<accession>P58192</accession>
<dbReference type="EC" id="2.7.7.6" evidence="1"/>
<dbReference type="EMBL" id="AE006641">
    <property type="protein sequence ID" value="AAK40565.1"/>
    <property type="status" value="ALT_INIT"/>
    <property type="molecule type" value="Genomic_DNA"/>
</dbReference>
<dbReference type="PIR" id="F90163">
    <property type="entry name" value="F90163"/>
</dbReference>
<dbReference type="RefSeq" id="WP_009990475.1">
    <property type="nucleotide sequence ID" value="NC_002754.1"/>
</dbReference>
<dbReference type="PDB" id="2PMZ">
    <property type="method" value="X-ray"/>
    <property type="resolution" value="3.40 A"/>
    <property type="chains" value="C/G=1-392"/>
</dbReference>
<dbReference type="PDB" id="3HKZ">
    <property type="method" value="X-ray"/>
    <property type="resolution" value="3.40 A"/>
    <property type="chains" value="C/M=1-392"/>
</dbReference>
<dbReference type="PDBsum" id="2PMZ"/>
<dbReference type="PDBsum" id="3HKZ"/>
<dbReference type="SMR" id="P58192"/>
<dbReference type="DIP" id="DIP-60639N"/>
<dbReference type="FunCoup" id="P58192">
    <property type="interactions" value="10"/>
</dbReference>
<dbReference type="IntAct" id="P58192">
    <property type="interactions" value="1"/>
</dbReference>
<dbReference type="STRING" id="273057.SSO0223"/>
<dbReference type="PaxDb" id="273057-SSO0223"/>
<dbReference type="EnsemblBacteria" id="AAK40565">
    <property type="protein sequence ID" value="AAK40565"/>
    <property type="gene ID" value="SSO0223"/>
</dbReference>
<dbReference type="GeneID" id="44129194"/>
<dbReference type="KEGG" id="sso:SSO0223"/>
<dbReference type="PATRIC" id="fig|273057.12.peg.220"/>
<dbReference type="eggNOG" id="arCOG04256">
    <property type="taxonomic scope" value="Archaea"/>
</dbReference>
<dbReference type="HOGENOM" id="CLU_037097_1_0_2"/>
<dbReference type="InParanoid" id="P58192"/>
<dbReference type="PhylomeDB" id="P58192"/>
<dbReference type="BRENDA" id="2.7.7.6">
    <property type="organism ID" value="6163"/>
</dbReference>
<dbReference type="EvolutionaryTrace" id="P58192"/>
<dbReference type="Proteomes" id="UP000001974">
    <property type="component" value="Chromosome"/>
</dbReference>
<dbReference type="GO" id="GO:0005737">
    <property type="term" value="C:cytoplasm"/>
    <property type="evidence" value="ECO:0007669"/>
    <property type="project" value="UniProtKB-SubCell"/>
</dbReference>
<dbReference type="GO" id="GO:0000428">
    <property type="term" value="C:DNA-directed RNA polymerase complex"/>
    <property type="evidence" value="ECO:0000314"/>
    <property type="project" value="UniProtKB"/>
</dbReference>
<dbReference type="GO" id="GO:0003677">
    <property type="term" value="F:DNA binding"/>
    <property type="evidence" value="ECO:0007669"/>
    <property type="project" value="UniProtKB-UniRule"/>
</dbReference>
<dbReference type="GO" id="GO:0003899">
    <property type="term" value="F:DNA-directed RNA polymerase activity"/>
    <property type="evidence" value="ECO:0007669"/>
    <property type="project" value="UniProtKB-UniRule"/>
</dbReference>
<dbReference type="GO" id="GO:0006351">
    <property type="term" value="P:DNA-templated transcription"/>
    <property type="evidence" value="ECO:0007669"/>
    <property type="project" value="UniProtKB-UniRule"/>
</dbReference>
<dbReference type="CDD" id="cd06528">
    <property type="entry name" value="RNAP_A"/>
    <property type="match status" value="1"/>
</dbReference>
<dbReference type="Gene3D" id="1.10.150.390">
    <property type="match status" value="1"/>
</dbReference>
<dbReference type="HAMAP" id="MF_00411">
    <property type="entry name" value="RNApol_arch_Rpo1C"/>
    <property type="match status" value="1"/>
</dbReference>
<dbReference type="InterPro" id="IPR045867">
    <property type="entry name" value="DNA-dir_RpoC_beta_prime"/>
</dbReference>
<dbReference type="InterPro" id="IPR007081">
    <property type="entry name" value="RNA_pol_Rpb1_5"/>
</dbReference>
<dbReference type="InterPro" id="IPR012757">
    <property type="entry name" value="RPO1C"/>
</dbReference>
<dbReference type="NCBIfam" id="TIGR02389">
    <property type="entry name" value="RNA_pol_rpoA2"/>
    <property type="match status" value="1"/>
</dbReference>
<dbReference type="PANTHER" id="PTHR19376">
    <property type="entry name" value="DNA-DIRECTED RNA POLYMERASE"/>
    <property type="match status" value="1"/>
</dbReference>
<dbReference type="PANTHER" id="PTHR19376:SF32">
    <property type="entry name" value="DNA-DIRECTED RNA POLYMERASE III SUBUNIT RPC1"/>
    <property type="match status" value="1"/>
</dbReference>
<dbReference type="Pfam" id="PF04998">
    <property type="entry name" value="RNA_pol_Rpb1_5"/>
    <property type="match status" value="1"/>
</dbReference>
<dbReference type="SUPFAM" id="SSF64484">
    <property type="entry name" value="beta and beta-prime subunits of DNA dependent RNA-polymerase"/>
    <property type="match status" value="1"/>
</dbReference>
<feature type="chain" id="PRO_0000074026" description="DNA-directed RNA polymerase subunit Rpo1C">
    <location>
        <begin position="1"/>
        <end position="392"/>
    </location>
</feature>
<feature type="helix" evidence="6">
    <location>
        <begin position="11"/>
        <end position="17"/>
    </location>
</feature>
<feature type="helix" evidence="6">
    <location>
        <begin position="20"/>
        <end position="23"/>
    </location>
</feature>
<feature type="helix" evidence="6">
    <location>
        <begin position="29"/>
        <end position="34"/>
    </location>
</feature>
<feature type="turn" evidence="6">
    <location>
        <begin position="39"/>
        <end position="41"/>
    </location>
</feature>
<feature type="helix" evidence="6">
    <location>
        <begin position="47"/>
        <end position="56"/>
    </location>
</feature>
<feature type="helix" evidence="6">
    <location>
        <begin position="57"/>
        <end position="59"/>
    </location>
</feature>
<feature type="helix" evidence="6">
    <location>
        <begin position="67"/>
        <end position="74"/>
    </location>
</feature>
<feature type="turn" evidence="6">
    <location>
        <begin position="75"/>
        <end position="78"/>
    </location>
</feature>
<feature type="helix" evidence="6">
    <location>
        <begin position="79"/>
        <end position="81"/>
    </location>
</feature>
<feature type="helix" evidence="6">
    <location>
        <begin position="102"/>
        <end position="109"/>
    </location>
</feature>
<feature type="strand" evidence="6">
    <location>
        <begin position="118"/>
        <end position="122"/>
    </location>
</feature>
<feature type="strand" evidence="6">
    <location>
        <begin position="124"/>
        <end position="126"/>
    </location>
</feature>
<feature type="helix" evidence="6">
    <location>
        <begin position="131"/>
        <end position="139"/>
    </location>
</feature>
<feature type="helix" evidence="7">
    <location>
        <begin position="146"/>
        <end position="148"/>
    </location>
</feature>
<feature type="strand" evidence="7">
    <location>
        <begin position="151"/>
        <end position="155"/>
    </location>
</feature>
<feature type="strand" evidence="7">
    <location>
        <begin position="157"/>
        <end position="160"/>
    </location>
</feature>
<feature type="strand" evidence="7">
    <location>
        <begin position="162"/>
        <end position="165"/>
    </location>
</feature>
<feature type="helix" evidence="7">
    <location>
        <begin position="169"/>
        <end position="173"/>
    </location>
</feature>
<feature type="turn" evidence="7">
    <location>
        <begin position="180"/>
        <end position="182"/>
    </location>
</feature>
<feature type="strand" evidence="7">
    <location>
        <begin position="186"/>
        <end position="188"/>
    </location>
</feature>
<feature type="strand" evidence="7">
    <location>
        <begin position="199"/>
        <end position="203"/>
    </location>
</feature>
<feature type="strand" evidence="7">
    <location>
        <begin position="208"/>
        <end position="211"/>
    </location>
</feature>
<feature type="helix" evidence="7">
    <location>
        <begin position="216"/>
        <end position="218"/>
    </location>
</feature>
<feature type="helix" evidence="7">
    <location>
        <begin position="221"/>
        <end position="224"/>
    </location>
</feature>
<feature type="strand" evidence="7">
    <location>
        <begin position="228"/>
        <end position="230"/>
    </location>
</feature>
<feature type="strand" evidence="7">
    <location>
        <begin position="238"/>
        <end position="240"/>
    </location>
</feature>
<feature type="strand" evidence="6">
    <location>
        <begin position="243"/>
        <end position="245"/>
    </location>
</feature>
<feature type="strand" evidence="6">
    <location>
        <begin position="247"/>
        <end position="252"/>
    </location>
</feature>
<feature type="turn" evidence="6">
    <location>
        <begin position="256"/>
        <end position="260"/>
    </location>
</feature>
<feature type="strand" evidence="7">
    <location>
        <begin position="261"/>
        <end position="264"/>
    </location>
</feature>
<feature type="strand" evidence="6">
    <location>
        <begin position="265"/>
        <end position="270"/>
    </location>
</feature>
<feature type="helix" evidence="6">
    <location>
        <begin position="276"/>
        <end position="281"/>
    </location>
</feature>
<feature type="helix" evidence="6">
    <location>
        <begin position="283"/>
        <end position="292"/>
    </location>
</feature>
<feature type="turn" evidence="6">
    <location>
        <begin position="293"/>
        <end position="297"/>
    </location>
</feature>
<feature type="helix" evidence="6">
    <location>
        <begin position="298"/>
        <end position="300"/>
    </location>
</feature>
<feature type="helix" evidence="6">
    <location>
        <begin position="307"/>
        <end position="317"/>
    </location>
</feature>
<feature type="strand" evidence="6">
    <location>
        <begin position="318"/>
        <end position="322"/>
    </location>
</feature>
<feature type="turn" evidence="6">
    <location>
        <begin position="328"/>
        <end position="331"/>
    </location>
</feature>
<feature type="strand" evidence="6">
    <location>
        <begin position="332"/>
        <end position="336"/>
    </location>
</feature>
<feature type="helix" evidence="6">
    <location>
        <begin position="338"/>
        <end position="343"/>
    </location>
</feature>
<feature type="helix" evidence="6">
    <location>
        <begin position="350"/>
        <end position="356"/>
    </location>
</feature>
<feature type="strand" evidence="6">
    <location>
        <begin position="365"/>
        <end position="367"/>
    </location>
</feature>
<feature type="helix" evidence="6">
    <location>
        <begin position="368"/>
        <end position="372"/>
    </location>
</feature>
<feature type="strand" evidence="6">
    <location>
        <begin position="377"/>
        <end position="379"/>
    </location>
</feature>
<feature type="turn" evidence="6">
    <location>
        <begin position="380"/>
        <end position="382"/>
    </location>
</feature>
<feature type="strand" evidence="6">
    <location>
        <begin position="384"/>
        <end position="386"/>
    </location>
</feature>
<reference key="1">
    <citation type="journal article" date="2001" name="Proc. Natl. Acad. Sci. U.S.A.">
        <title>The complete genome of the crenarchaeon Sulfolobus solfataricus P2.</title>
        <authorList>
            <person name="She Q."/>
            <person name="Singh R.K."/>
            <person name="Confalonieri F."/>
            <person name="Zivanovic Y."/>
            <person name="Allard G."/>
            <person name="Awayez M.J."/>
            <person name="Chan-Weiher C.C.-Y."/>
            <person name="Clausen I.G."/>
            <person name="Curtis B.A."/>
            <person name="De Moors A."/>
            <person name="Erauso G."/>
            <person name="Fletcher C."/>
            <person name="Gordon P.M.K."/>
            <person name="Heikamp-de Jong I."/>
            <person name="Jeffries A.C."/>
            <person name="Kozera C.J."/>
            <person name="Medina N."/>
            <person name="Peng X."/>
            <person name="Thi-Ngoc H.P."/>
            <person name="Redder P."/>
            <person name="Schenk M.E."/>
            <person name="Theriault C."/>
            <person name="Tolstrup N."/>
            <person name="Charlebois R.L."/>
            <person name="Doolittle W.F."/>
            <person name="Duguet M."/>
            <person name="Gaasterland T."/>
            <person name="Garrett R.A."/>
            <person name="Ragan M.A."/>
            <person name="Sensen C.W."/>
            <person name="Van der Oost J."/>
        </authorList>
    </citation>
    <scope>NUCLEOTIDE SEQUENCE [LARGE SCALE GENOMIC DNA]</scope>
    <source>
        <strain>ATCC 35092 / DSM 1617 / JCM 11322 / P2</strain>
    </source>
</reference>
<reference evidence="4 5" key="2">
    <citation type="journal article" date="2008" name="Nature">
        <title>The X-ray crystal structure of RNA polymerase from Archaea.</title>
        <authorList>
            <person name="Hirata A."/>
            <person name="Klein B.J."/>
            <person name="Murakami K.S."/>
        </authorList>
    </citation>
    <scope>X-RAY CRYSTALLOGRAPHY (3.4 ANGSTROMS) OF THE RNA POLYMERASE COMPLEX</scope>
    <scope>FUNCTION</scope>
    <scope>SUBUNIT</scope>
</reference>
<gene>
    <name evidence="1" type="primary">rpo1C</name>
    <name evidence="1" type="synonym">rpoA2</name>
    <name type="ordered locus">SSO0223</name>
</gene>
<protein>
    <recommendedName>
        <fullName evidence="1">DNA-directed RNA polymerase subunit Rpo1C</fullName>
        <ecNumber evidence="1">2.7.7.6</ecNumber>
    </recommendedName>
    <alternativeName>
        <fullName evidence="1">DNA-directed RNA polymerase subunit A''</fullName>
    </alternativeName>
</protein>
<name>RPO1C_SACS2</name>
<evidence type="ECO:0000255" key="1">
    <source>
        <dbReference type="HAMAP-Rule" id="MF_00411"/>
    </source>
</evidence>
<evidence type="ECO:0000269" key="2">
    <source>
    </source>
</evidence>
<evidence type="ECO:0000305" key="3"/>
<evidence type="ECO:0007744" key="4">
    <source>
        <dbReference type="PDB" id="2PMZ"/>
    </source>
</evidence>
<evidence type="ECO:0007744" key="5">
    <source>
        <dbReference type="PDB" id="3HKZ"/>
    </source>
</evidence>
<evidence type="ECO:0007829" key="6">
    <source>
        <dbReference type="PDB" id="2PMZ"/>
    </source>
</evidence>
<evidence type="ECO:0007829" key="7">
    <source>
        <dbReference type="PDB" id="3HKZ"/>
    </source>
</evidence>
<organism>
    <name type="scientific">Saccharolobus solfataricus (strain ATCC 35092 / DSM 1617 / JCM 11322 / P2)</name>
    <name type="common">Sulfolobus solfataricus</name>
    <dbReference type="NCBI Taxonomy" id="273057"/>
    <lineage>
        <taxon>Archaea</taxon>
        <taxon>Thermoproteota</taxon>
        <taxon>Thermoprotei</taxon>
        <taxon>Sulfolobales</taxon>
        <taxon>Sulfolobaceae</taxon>
        <taxon>Saccharolobus</taxon>
    </lineage>
</organism>